<proteinExistence type="inferred from homology"/>
<comment type="function">
    <text evidence="1">Part of the phosphoribosylformylglycinamidine synthase complex involved in the purines biosynthetic pathway. Catalyzes the ATP-dependent conversion of formylglycinamide ribonucleotide (FGAR) and glutamine to yield formylglycinamidine ribonucleotide (FGAM) and glutamate. The FGAM synthase complex is composed of three subunits. PurQ produces an ammonia molecule by converting glutamine to glutamate. PurL transfers the ammonia molecule to FGAR to form FGAM in an ATP-dependent manner. PurS interacts with PurQ and PurL and is thought to assist in the transfer of the ammonia molecule from PurQ to PurL.</text>
</comment>
<comment type="catalytic activity">
    <reaction evidence="1">
        <text>N(2)-formyl-N(1)-(5-phospho-beta-D-ribosyl)glycinamide + L-glutamine + ATP + H2O = 2-formamido-N(1)-(5-O-phospho-beta-D-ribosyl)acetamidine + L-glutamate + ADP + phosphate + H(+)</text>
        <dbReference type="Rhea" id="RHEA:17129"/>
        <dbReference type="ChEBI" id="CHEBI:15377"/>
        <dbReference type="ChEBI" id="CHEBI:15378"/>
        <dbReference type="ChEBI" id="CHEBI:29985"/>
        <dbReference type="ChEBI" id="CHEBI:30616"/>
        <dbReference type="ChEBI" id="CHEBI:43474"/>
        <dbReference type="ChEBI" id="CHEBI:58359"/>
        <dbReference type="ChEBI" id="CHEBI:147286"/>
        <dbReference type="ChEBI" id="CHEBI:147287"/>
        <dbReference type="ChEBI" id="CHEBI:456216"/>
        <dbReference type="EC" id="6.3.5.3"/>
    </reaction>
</comment>
<comment type="pathway">
    <text evidence="1">Purine metabolism; IMP biosynthesis via de novo pathway; 5-amino-1-(5-phospho-D-ribosyl)imidazole from N(2)-formyl-N(1)-(5-phospho-D-ribosyl)glycinamide: step 1/2.</text>
</comment>
<comment type="subunit">
    <text evidence="1">Monomer. Part of the FGAM synthase complex composed of 1 PurL, 1 PurQ and 2 PurS subunits.</text>
</comment>
<comment type="subcellular location">
    <subcellularLocation>
        <location evidence="1">Cytoplasm</location>
    </subcellularLocation>
</comment>
<comment type="similarity">
    <text evidence="1">Belongs to the FGAMS family.</text>
</comment>
<keyword id="KW-0067">ATP-binding</keyword>
<keyword id="KW-0963">Cytoplasm</keyword>
<keyword id="KW-0436">Ligase</keyword>
<keyword id="KW-0460">Magnesium</keyword>
<keyword id="KW-0479">Metal-binding</keyword>
<keyword id="KW-0547">Nucleotide-binding</keyword>
<keyword id="KW-0658">Purine biosynthesis</keyword>
<keyword id="KW-1185">Reference proteome</keyword>
<sequence length="742" mass="80945">MKQAMTPEEIKEKKPYLDWSLTEAEYDYIRTQLLGRLPNYTETGLFSAMWSEHCSYKKSKPVLRLFPNKNERVLQGPGEGAGVVDIDDGQAVVFKAESHNHPTTVEPYQGAATGVGGILRDIFSMGARPIASLDSLHFGELDNSTTRMKVTNTVRGIGDYGNCMGIPTIAGETTFDPCYQGNILCNAMSVGLMDQKDIQQGRAAGIGNAVMYVGAKTGRDGIHGATFASADFNDENMTQRSAVQVGNPFMEKLLLEACLDLIRNHPDWLVGIQDMGAAGIVSSSAEMASEGQSGMELNLDLVPQREPGMSAYEIMLSESQERMLLCVKKGHEEDVKKIFDFYDLEAVTIGRITAGHDYVLFHDGEEVCHIPVSSLTDDVLEEESLEKKPARIELAEQQPAWIPDIDNVAEVLTALLAQSTIADKSSLYQQYDSQVRTNTVAGPGSDAGVLRIRGTHKGLAMTTDGNGRFVYLSPEVGGQIALVEAAANIIASGAEPLAITDCLNYGDPTDPEIFWELHQSVQGMADACREFNTPVISGNVSLYNENNGQAIHPTPMVGMVGLIKNIDRVIPSFVQHPGDKVYLVGQTRDDYAGSELQKMMTGDISGIVESFDLHHVHQYMQRLLTTMENGLVSSAHDLSEGGLGVALAETVFKTDLGLKIDLADQHTARLFSETPGRFIVTVAPEKATEFEQVLGKDAHLIGEVTNSHWLMVKLANGELNENVAKLQETWEEAIPCQLKSKD</sequence>
<organism>
    <name type="scientific">Limosilactobacillus reuteri (strain DSM 20016)</name>
    <name type="common">Lactobacillus reuteri</name>
    <dbReference type="NCBI Taxonomy" id="557436"/>
    <lineage>
        <taxon>Bacteria</taxon>
        <taxon>Bacillati</taxon>
        <taxon>Bacillota</taxon>
        <taxon>Bacilli</taxon>
        <taxon>Lactobacillales</taxon>
        <taxon>Lactobacillaceae</taxon>
        <taxon>Limosilactobacillus</taxon>
    </lineage>
</organism>
<protein>
    <recommendedName>
        <fullName evidence="1">Phosphoribosylformylglycinamidine synthase subunit PurL</fullName>
        <shortName evidence="1">FGAM synthase</shortName>
        <ecNumber evidence="1">6.3.5.3</ecNumber>
    </recommendedName>
    <alternativeName>
        <fullName evidence="1">Formylglycinamide ribonucleotide amidotransferase subunit II</fullName>
        <shortName evidence="1">FGAR amidotransferase II</shortName>
        <shortName evidence="1">FGAR-AT II</shortName>
    </alternativeName>
    <alternativeName>
        <fullName evidence="1">Glutamine amidotransferase PurL</fullName>
    </alternativeName>
    <alternativeName>
        <fullName evidence="1">Phosphoribosylformylglycinamidine synthase subunit II</fullName>
    </alternativeName>
</protein>
<feature type="chain" id="PRO_1000060091" description="Phosphoribosylformylglycinamidine synthase subunit PurL">
    <location>
        <begin position="1"/>
        <end position="742"/>
    </location>
</feature>
<feature type="active site" evidence="1">
    <location>
        <position position="53"/>
    </location>
</feature>
<feature type="active site" description="Proton acceptor" evidence="1">
    <location>
        <position position="99"/>
    </location>
</feature>
<feature type="binding site" evidence="1">
    <location>
        <position position="56"/>
    </location>
    <ligand>
        <name>ATP</name>
        <dbReference type="ChEBI" id="CHEBI:30616"/>
    </ligand>
</feature>
<feature type="binding site" evidence="1">
    <location>
        <position position="95"/>
    </location>
    <ligand>
        <name>ATP</name>
        <dbReference type="ChEBI" id="CHEBI:30616"/>
    </ligand>
</feature>
<feature type="binding site" evidence="1">
    <location>
        <position position="97"/>
    </location>
    <ligand>
        <name>Mg(2+)</name>
        <dbReference type="ChEBI" id="CHEBI:18420"/>
        <label>1</label>
    </ligand>
</feature>
<feature type="binding site" evidence="1">
    <location>
        <begin position="98"/>
        <end position="101"/>
    </location>
    <ligand>
        <name>substrate</name>
    </ligand>
</feature>
<feature type="binding site" evidence="1">
    <location>
        <position position="120"/>
    </location>
    <ligand>
        <name>substrate</name>
    </ligand>
</feature>
<feature type="binding site" evidence="1">
    <location>
        <position position="121"/>
    </location>
    <ligand>
        <name>Mg(2+)</name>
        <dbReference type="ChEBI" id="CHEBI:18420"/>
        <label>2</label>
    </ligand>
</feature>
<feature type="binding site" evidence="1">
    <location>
        <position position="244"/>
    </location>
    <ligand>
        <name>substrate</name>
    </ligand>
</feature>
<feature type="binding site" evidence="1">
    <location>
        <position position="274"/>
    </location>
    <ligand>
        <name>Mg(2+)</name>
        <dbReference type="ChEBI" id="CHEBI:18420"/>
        <label>2</label>
    </ligand>
</feature>
<feature type="binding site" evidence="1">
    <location>
        <begin position="318"/>
        <end position="320"/>
    </location>
    <ligand>
        <name>substrate</name>
    </ligand>
</feature>
<feature type="binding site" evidence="1">
    <location>
        <position position="501"/>
    </location>
    <ligand>
        <name>ATP</name>
        <dbReference type="ChEBI" id="CHEBI:30616"/>
    </ligand>
</feature>
<feature type="binding site" evidence="1">
    <location>
        <position position="538"/>
    </location>
    <ligand>
        <name>ATP</name>
        <dbReference type="ChEBI" id="CHEBI:30616"/>
    </ligand>
</feature>
<feature type="binding site" evidence="1">
    <location>
        <position position="539"/>
    </location>
    <ligand>
        <name>Mg(2+)</name>
        <dbReference type="ChEBI" id="CHEBI:18420"/>
        <label>1</label>
    </ligand>
</feature>
<feature type="binding site" evidence="1">
    <location>
        <position position="541"/>
    </location>
    <ligand>
        <name>substrate</name>
    </ligand>
</feature>
<reference key="1">
    <citation type="journal article" date="2011" name="PLoS Genet.">
        <title>The evolution of host specialization in the vertebrate gut symbiont Lactobacillus reuteri.</title>
        <authorList>
            <person name="Frese S.A."/>
            <person name="Benson A.K."/>
            <person name="Tannock G.W."/>
            <person name="Loach D.M."/>
            <person name="Kim J."/>
            <person name="Zhang M."/>
            <person name="Oh P.L."/>
            <person name="Heng N.C."/>
            <person name="Patil P.B."/>
            <person name="Juge N."/>
            <person name="Mackenzie D.A."/>
            <person name="Pearson B.M."/>
            <person name="Lapidus A."/>
            <person name="Dalin E."/>
            <person name="Tice H."/>
            <person name="Goltsman E."/>
            <person name="Land M."/>
            <person name="Hauser L."/>
            <person name="Ivanova N."/>
            <person name="Kyrpides N.C."/>
            <person name="Walter J."/>
        </authorList>
    </citation>
    <scope>NUCLEOTIDE SEQUENCE [LARGE SCALE GENOMIC DNA]</scope>
    <source>
        <strain>DSM 20016</strain>
    </source>
</reference>
<gene>
    <name evidence="1" type="primary">purL</name>
    <name type="ordered locus">Lreu_0140</name>
</gene>
<name>PURL_LIMRD</name>
<accession>A5VHT8</accession>
<dbReference type="EC" id="6.3.5.3" evidence="1"/>
<dbReference type="EMBL" id="CP000705">
    <property type="protein sequence ID" value="ABQ82412.1"/>
    <property type="molecule type" value="Genomic_DNA"/>
</dbReference>
<dbReference type="RefSeq" id="WP_003669724.1">
    <property type="nucleotide sequence ID" value="NC_009513.1"/>
</dbReference>
<dbReference type="SMR" id="A5VHT8"/>
<dbReference type="STRING" id="557436.Lreu_0140"/>
<dbReference type="KEGG" id="lre:Lreu_0140"/>
<dbReference type="PATRIC" id="fig|557436.17.peg.315"/>
<dbReference type="eggNOG" id="COG0046">
    <property type="taxonomic scope" value="Bacteria"/>
</dbReference>
<dbReference type="HOGENOM" id="CLU_003100_0_1_9"/>
<dbReference type="UniPathway" id="UPA00074">
    <property type="reaction ID" value="UER00128"/>
</dbReference>
<dbReference type="Proteomes" id="UP000001991">
    <property type="component" value="Chromosome"/>
</dbReference>
<dbReference type="GO" id="GO:0005737">
    <property type="term" value="C:cytoplasm"/>
    <property type="evidence" value="ECO:0007669"/>
    <property type="project" value="UniProtKB-SubCell"/>
</dbReference>
<dbReference type="GO" id="GO:0005524">
    <property type="term" value="F:ATP binding"/>
    <property type="evidence" value="ECO:0007669"/>
    <property type="project" value="UniProtKB-UniRule"/>
</dbReference>
<dbReference type="GO" id="GO:0000287">
    <property type="term" value="F:magnesium ion binding"/>
    <property type="evidence" value="ECO:0007669"/>
    <property type="project" value="UniProtKB-UniRule"/>
</dbReference>
<dbReference type="GO" id="GO:0004642">
    <property type="term" value="F:phosphoribosylformylglycinamidine synthase activity"/>
    <property type="evidence" value="ECO:0007669"/>
    <property type="project" value="UniProtKB-UniRule"/>
</dbReference>
<dbReference type="GO" id="GO:0006189">
    <property type="term" value="P:'de novo' IMP biosynthetic process"/>
    <property type="evidence" value="ECO:0007669"/>
    <property type="project" value="UniProtKB-UniRule"/>
</dbReference>
<dbReference type="CDD" id="cd02203">
    <property type="entry name" value="PurL_repeat1"/>
    <property type="match status" value="1"/>
</dbReference>
<dbReference type="CDD" id="cd02204">
    <property type="entry name" value="PurL_repeat2"/>
    <property type="match status" value="1"/>
</dbReference>
<dbReference type="FunFam" id="3.30.1330.10:FF:000004">
    <property type="entry name" value="Phosphoribosylformylglycinamidine synthase subunit PurL"/>
    <property type="match status" value="1"/>
</dbReference>
<dbReference type="Gene3D" id="3.90.650.10">
    <property type="entry name" value="PurM-like C-terminal domain"/>
    <property type="match status" value="2"/>
</dbReference>
<dbReference type="Gene3D" id="3.30.1330.10">
    <property type="entry name" value="PurM-like, N-terminal domain"/>
    <property type="match status" value="2"/>
</dbReference>
<dbReference type="HAMAP" id="MF_00420">
    <property type="entry name" value="PurL_2"/>
    <property type="match status" value="1"/>
</dbReference>
<dbReference type="InterPro" id="IPR010074">
    <property type="entry name" value="PRibForGlyAmidine_synth_PurL"/>
</dbReference>
<dbReference type="InterPro" id="IPR041609">
    <property type="entry name" value="PurL_linker"/>
</dbReference>
<dbReference type="InterPro" id="IPR010918">
    <property type="entry name" value="PurM-like_C_dom"/>
</dbReference>
<dbReference type="InterPro" id="IPR036676">
    <property type="entry name" value="PurM-like_C_sf"/>
</dbReference>
<dbReference type="InterPro" id="IPR016188">
    <property type="entry name" value="PurM-like_N"/>
</dbReference>
<dbReference type="InterPro" id="IPR036921">
    <property type="entry name" value="PurM-like_N_sf"/>
</dbReference>
<dbReference type="NCBIfam" id="TIGR01736">
    <property type="entry name" value="FGAM_synth_II"/>
    <property type="match status" value="1"/>
</dbReference>
<dbReference type="NCBIfam" id="NF002290">
    <property type="entry name" value="PRK01213.1"/>
    <property type="match status" value="1"/>
</dbReference>
<dbReference type="PANTHER" id="PTHR43555">
    <property type="entry name" value="PHOSPHORIBOSYLFORMYLGLYCINAMIDINE SYNTHASE SUBUNIT PURL"/>
    <property type="match status" value="1"/>
</dbReference>
<dbReference type="PANTHER" id="PTHR43555:SF1">
    <property type="entry name" value="PHOSPHORIBOSYLFORMYLGLYCINAMIDINE SYNTHASE SUBUNIT PURL"/>
    <property type="match status" value="1"/>
</dbReference>
<dbReference type="Pfam" id="PF00586">
    <property type="entry name" value="AIRS"/>
    <property type="match status" value="2"/>
</dbReference>
<dbReference type="Pfam" id="PF02769">
    <property type="entry name" value="AIRS_C"/>
    <property type="match status" value="2"/>
</dbReference>
<dbReference type="Pfam" id="PF18072">
    <property type="entry name" value="FGAR-AT_linker"/>
    <property type="match status" value="1"/>
</dbReference>
<dbReference type="PIRSF" id="PIRSF001587">
    <property type="entry name" value="FGAM_synthase_II"/>
    <property type="match status" value="1"/>
</dbReference>
<dbReference type="SUPFAM" id="SSF56042">
    <property type="entry name" value="PurM C-terminal domain-like"/>
    <property type="match status" value="2"/>
</dbReference>
<dbReference type="SUPFAM" id="SSF55326">
    <property type="entry name" value="PurM N-terminal domain-like"/>
    <property type="match status" value="2"/>
</dbReference>
<evidence type="ECO:0000255" key="1">
    <source>
        <dbReference type="HAMAP-Rule" id="MF_00420"/>
    </source>
</evidence>